<dbReference type="EC" id="2.1.2.10" evidence="1"/>
<dbReference type="EMBL" id="CP001113">
    <property type="protein sequence ID" value="ACF62354.1"/>
    <property type="molecule type" value="Genomic_DNA"/>
</dbReference>
<dbReference type="RefSeq" id="WP_000068733.1">
    <property type="nucleotide sequence ID" value="NZ_CCMR01000001.1"/>
</dbReference>
<dbReference type="SMR" id="B4T550"/>
<dbReference type="KEGG" id="see:SNSL254_A3290"/>
<dbReference type="HOGENOM" id="CLU_007884_10_2_6"/>
<dbReference type="Proteomes" id="UP000008824">
    <property type="component" value="Chromosome"/>
</dbReference>
<dbReference type="GO" id="GO:0005829">
    <property type="term" value="C:cytosol"/>
    <property type="evidence" value="ECO:0007669"/>
    <property type="project" value="TreeGrafter"/>
</dbReference>
<dbReference type="GO" id="GO:0005960">
    <property type="term" value="C:glycine cleavage complex"/>
    <property type="evidence" value="ECO:0007669"/>
    <property type="project" value="InterPro"/>
</dbReference>
<dbReference type="GO" id="GO:0004047">
    <property type="term" value="F:aminomethyltransferase activity"/>
    <property type="evidence" value="ECO:0007669"/>
    <property type="project" value="UniProtKB-UniRule"/>
</dbReference>
<dbReference type="GO" id="GO:0008483">
    <property type="term" value="F:transaminase activity"/>
    <property type="evidence" value="ECO:0007669"/>
    <property type="project" value="UniProtKB-KW"/>
</dbReference>
<dbReference type="GO" id="GO:0019464">
    <property type="term" value="P:glycine decarboxylation via glycine cleavage system"/>
    <property type="evidence" value="ECO:0007669"/>
    <property type="project" value="UniProtKB-UniRule"/>
</dbReference>
<dbReference type="FunFam" id="2.40.30.110:FF:000001">
    <property type="entry name" value="Aminomethyltransferase"/>
    <property type="match status" value="1"/>
</dbReference>
<dbReference type="FunFam" id="3.30.70.1400:FF:000001">
    <property type="entry name" value="Aminomethyltransferase"/>
    <property type="match status" value="1"/>
</dbReference>
<dbReference type="FunFam" id="4.10.1250.10:FF:000001">
    <property type="entry name" value="Aminomethyltransferase"/>
    <property type="match status" value="1"/>
</dbReference>
<dbReference type="Gene3D" id="2.40.30.110">
    <property type="entry name" value="Aminomethyltransferase beta-barrel domains"/>
    <property type="match status" value="1"/>
</dbReference>
<dbReference type="Gene3D" id="3.30.70.1400">
    <property type="entry name" value="Aminomethyltransferase beta-barrel domains"/>
    <property type="match status" value="1"/>
</dbReference>
<dbReference type="Gene3D" id="4.10.1250.10">
    <property type="entry name" value="Aminomethyltransferase fragment"/>
    <property type="match status" value="1"/>
</dbReference>
<dbReference type="Gene3D" id="3.30.1360.120">
    <property type="entry name" value="Probable tRNA modification gtpase trme, domain 1"/>
    <property type="match status" value="1"/>
</dbReference>
<dbReference type="HAMAP" id="MF_00259">
    <property type="entry name" value="GcvT"/>
    <property type="match status" value="1"/>
</dbReference>
<dbReference type="InterPro" id="IPR006223">
    <property type="entry name" value="GCS_T"/>
</dbReference>
<dbReference type="InterPro" id="IPR022903">
    <property type="entry name" value="GCS_T_bac"/>
</dbReference>
<dbReference type="InterPro" id="IPR013977">
    <property type="entry name" value="GCST_C"/>
</dbReference>
<dbReference type="InterPro" id="IPR006222">
    <property type="entry name" value="GCV_T_N"/>
</dbReference>
<dbReference type="InterPro" id="IPR028896">
    <property type="entry name" value="GcvT/YgfZ/DmdA"/>
</dbReference>
<dbReference type="InterPro" id="IPR029043">
    <property type="entry name" value="GcvT/YgfZ_C"/>
</dbReference>
<dbReference type="InterPro" id="IPR027266">
    <property type="entry name" value="TrmE/GcvT_dom1"/>
</dbReference>
<dbReference type="NCBIfam" id="TIGR00528">
    <property type="entry name" value="gcvT"/>
    <property type="match status" value="1"/>
</dbReference>
<dbReference type="NCBIfam" id="NF001567">
    <property type="entry name" value="PRK00389.1"/>
    <property type="match status" value="1"/>
</dbReference>
<dbReference type="PANTHER" id="PTHR43757">
    <property type="entry name" value="AMINOMETHYLTRANSFERASE"/>
    <property type="match status" value="1"/>
</dbReference>
<dbReference type="PANTHER" id="PTHR43757:SF2">
    <property type="entry name" value="AMINOMETHYLTRANSFERASE, MITOCHONDRIAL"/>
    <property type="match status" value="1"/>
</dbReference>
<dbReference type="Pfam" id="PF01571">
    <property type="entry name" value="GCV_T"/>
    <property type="match status" value="1"/>
</dbReference>
<dbReference type="Pfam" id="PF08669">
    <property type="entry name" value="GCV_T_C"/>
    <property type="match status" value="1"/>
</dbReference>
<dbReference type="PIRSF" id="PIRSF006487">
    <property type="entry name" value="GcvT"/>
    <property type="match status" value="1"/>
</dbReference>
<dbReference type="SUPFAM" id="SSF101790">
    <property type="entry name" value="Aminomethyltransferase beta-barrel domain"/>
    <property type="match status" value="1"/>
</dbReference>
<dbReference type="SUPFAM" id="SSF103025">
    <property type="entry name" value="Folate-binding domain"/>
    <property type="match status" value="1"/>
</dbReference>
<protein>
    <recommendedName>
        <fullName evidence="1">Aminomethyltransferase</fullName>
        <ecNumber evidence="1">2.1.2.10</ecNumber>
    </recommendedName>
    <alternativeName>
        <fullName evidence="1">Glycine cleavage system T protein</fullName>
    </alternativeName>
</protein>
<sequence>MAQQTPLYEQHTLCGARMVDFHGWMMPLHYGSQLDEHHAVRTDAGMFDVSHMTIVDLHGSRTREFLRYLLANDVAKLTKTGKALYSGMLNASGGVIDDLIVYYFTEDFFRLVVNSATREKDLSWITQHAEPYAIDITVRDDLSLIAVQGPNAQEKAATLFTDEQRHAVEGMKPFFGVQAGDLFIATTGYTGEAGYEIAMPNEKAADFWRALVEAGVKPCGLGARDTLRLEAGMNLYGQEMDEGISPLAANMGWTIAWEPADRDFIGREALEMQREKGHEQLVGLVMTEKGVLRNELPVRFTDAQGNQQEGIITSGTFSPTLGYSIALARVPAGIGETAIVQIRNREMPVKVTKPVFVRNGKAVA</sequence>
<name>GCST_SALNS</name>
<gene>
    <name evidence="1" type="primary">gcvT</name>
    <name type="ordered locus">SNSL254_A3290</name>
</gene>
<evidence type="ECO:0000255" key="1">
    <source>
        <dbReference type="HAMAP-Rule" id="MF_00259"/>
    </source>
</evidence>
<keyword id="KW-0032">Aminotransferase</keyword>
<keyword id="KW-0808">Transferase</keyword>
<accession>B4T550</accession>
<proteinExistence type="inferred from homology"/>
<feature type="chain" id="PRO_1000114114" description="Aminomethyltransferase">
    <location>
        <begin position="1"/>
        <end position="364"/>
    </location>
</feature>
<comment type="function">
    <text evidence="1">The glycine cleavage system catalyzes the degradation of glycine.</text>
</comment>
<comment type="catalytic activity">
    <reaction evidence="1">
        <text>N(6)-[(R)-S(8)-aminomethyldihydrolipoyl]-L-lysyl-[protein] + (6S)-5,6,7,8-tetrahydrofolate = N(6)-[(R)-dihydrolipoyl]-L-lysyl-[protein] + (6R)-5,10-methylene-5,6,7,8-tetrahydrofolate + NH4(+)</text>
        <dbReference type="Rhea" id="RHEA:16945"/>
        <dbReference type="Rhea" id="RHEA-COMP:10475"/>
        <dbReference type="Rhea" id="RHEA-COMP:10492"/>
        <dbReference type="ChEBI" id="CHEBI:15636"/>
        <dbReference type="ChEBI" id="CHEBI:28938"/>
        <dbReference type="ChEBI" id="CHEBI:57453"/>
        <dbReference type="ChEBI" id="CHEBI:83100"/>
        <dbReference type="ChEBI" id="CHEBI:83143"/>
        <dbReference type="EC" id="2.1.2.10"/>
    </reaction>
</comment>
<comment type="subunit">
    <text evidence="1">The glycine cleavage system is composed of four proteins: P, T, L and H.</text>
</comment>
<comment type="similarity">
    <text evidence="1">Belongs to the GcvT family.</text>
</comment>
<organism>
    <name type="scientific">Salmonella newport (strain SL254)</name>
    <dbReference type="NCBI Taxonomy" id="423368"/>
    <lineage>
        <taxon>Bacteria</taxon>
        <taxon>Pseudomonadati</taxon>
        <taxon>Pseudomonadota</taxon>
        <taxon>Gammaproteobacteria</taxon>
        <taxon>Enterobacterales</taxon>
        <taxon>Enterobacteriaceae</taxon>
        <taxon>Salmonella</taxon>
    </lineage>
</organism>
<reference key="1">
    <citation type="journal article" date="2011" name="J. Bacteriol.">
        <title>Comparative genomics of 28 Salmonella enterica isolates: evidence for CRISPR-mediated adaptive sublineage evolution.</title>
        <authorList>
            <person name="Fricke W.F."/>
            <person name="Mammel M.K."/>
            <person name="McDermott P.F."/>
            <person name="Tartera C."/>
            <person name="White D.G."/>
            <person name="Leclerc J.E."/>
            <person name="Ravel J."/>
            <person name="Cebula T.A."/>
        </authorList>
    </citation>
    <scope>NUCLEOTIDE SEQUENCE [LARGE SCALE GENOMIC DNA]</scope>
    <source>
        <strain>SL254</strain>
    </source>
</reference>